<organism>
    <name type="scientific">Bradyrhizobium diazoefficiens (strain JCM 10833 / BCRC 13528 / IAM 13628 / NBRC 14792 / USDA 110)</name>
    <dbReference type="NCBI Taxonomy" id="224911"/>
    <lineage>
        <taxon>Bacteria</taxon>
        <taxon>Pseudomonadati</taxon>
        <taxon>Pseudomonadota</taxon>
        <taxon>Alphaproteobacteria</taxon>
        <taxon>Hyphomicrobiales</taxon>
        <taxon>Nitrobacteraceae</taxon>
        <taxon>Bradyrhizobium</taxon>
    </lineage>
</organism>
<comment type="function">
    <text evidence="1">Required for maturation of urease via the functional incorporation of the urease nickel metallocenter.</text>
</comment>
<comment type="subunit">
    <text evidence="1">UreD, UreF and UreG form a complex that acts as a GTP-hydrolysis-dependent molecular chaperone, activating the urease apoprotein by helping to assemble the nickel containing metallocenter of UreC. The UreE protein probably delivers the nickel.</text>
</comment>
<comment type="subcellular location">
    <subcellularLocation>
        <location evidence="1">Cytoplasm</location>
    </subcellularLocation>
</comment>
<comment type="similarity">
    <text evidence="1">Belongs to the UreD family.</text>
</comment>
<gene>
    <name evidence="1" type="primary">ureD</name>
    <name type="ordered locus">blr1453</name>
</gene>
<keyword id="KW-0143">Chaperone</keyword>
<keyword id="KW-0963">Cytoplasm</keyword>
<keyword id="KW-0996">Nickel insertion</keyword>
<keyword id="KW-1185">Reference proteome</keyword>
<evidence type="ECO:0000255" key="1">
    <source>
        <dbReference type="HAMAP-Rule" id="MF_01384"/>
    </source>
</evidence>
<reference key="1">
    <citation type="journal article" date="2002" name="DNA Res.">
        <title>Complete genomic sequence of nitrogen-fixing symbiotic bacterium Bradyrhizobium japonicum USDA110.</title>
        <authorList>
            <person name="Kaneko T."/>
            <person name="Nakamura Y."/>
            <person name="Sato S."/>
            <person name="Minamisawa K."/>
            <person name="Uchiumi T."/>
            <person name="Sasamoto S."/>
            <person name="Watanabe A."/>
            <person name="Idesawa K."/>
            <person name="Iriguchi M."/>
            <person name="Kawashima K."/>
            <person name="Kohara M."/>
            <person name="Matsumoto M."/>
            <person name="Shimpo S."/>
            <person name="Tsuruoka H."/>
            <person name="Wada T."/>
            <person name="Yamada M."/>
            <person name="Tabata S."/>
        </authorList>
    </citation>
    <scope>NUCLEOTIDE SEQUENCE [LARGE SCALE GENOMIC DNA]</scope>
    <source>
        <strain>JCM 10833 / BCRC 13528 / IAM 13628 / NBRC 14792 / USDA 110</strain>
    </source>
</reference>
<name>URED_BRADU</name>
<sequence>MRSELSVTSSIFEANRARGAVRFDVHARDGVTRRGVLHESGSLRVRFPSPEDEGLSGVFVNTAGGVAGGDRFDVEISAADAARLTLTTAAAEKVYRAPGPAAELNIALKVGAGAHLSWLPQETILFDRARVHRRFDIALDEAASLLLCEIVVFGRTAMGERMEQGEFVDRWRLSRGGRLVFAETVRLGGDIGAKLARSAVAKGGAAIGTALIVPGDEALIERIREASESFAGEVGISAWNGFAMARFCAQDAARLRADMMAVLARTGAALPRLWLN</sequence>
<proteinExistence type="inferred from homology"/>
<accession>Q89UG4</accession>
<protein>
    <recommendedName>
        <fullName evidence="1">Urease accessory protein UreD</fullName>
    </recommendedName>
</protein>
<dbReference type="EMBL" id="BA000040">
    <property type="protein sequence ID" value="BAC46718.1"/>
    <property type="molecule type" value="Genomic_DNA"/>
</dbReference>
<dbReference type="RefSeq" id="NP_768093.1">
    <property type="nucleotide sequence ID" value="NC_004463.1"/>
</dbReference>
<dbReference type="RefSeq" id="WP_011084270.1">
    <property type="nucleotide sequence ID" value="NC_004463.1"/>
</dbReference>
<dbReference type="SMR" id="Q89UG4"/>
<dbReference type="STRING" id="224911.AAV28_04210"/>
<dbReference type="EnsemblBacteria" id="BAC46718">
    <property type="protein sequence ID" value="BAC46718"/>
    <property type="gene ID" value="BAC46718"/>
</dbReference>
<dbReference type="GeneID" id="46488729"/>
<dbReference type="KEGG" id="bja:blr1453"/>
<dbReference type="PATRIC" id="fig|224911.44.peg.884"/>
<dbReference type="eggNOG" id="COG0829">
    <property type="taxonomic scope" value="Bacteria"/>
</dbReference>
<dbReference type="HOGENOM" id="CLU_056339_2_0_5"/>
<dbReference type="InParanoid" id="Q89UG4"/>
<dbReference type="OrthoDB" id="9798842at2"/>
<dbReference type="PhylomeDB" id="Q89UG4"/>
<dbReference type="Proteomes" id="UP000002526">
    <property type="component" value="Chromosome"/>
</dbReference>
<dbReference type="GO" id="GO:0005737">
    <property type="term" value="C:cytoplasm"/>
    <property type="evidence" value="ECO:0007669"/>
    <property type="project" value="UniProtKB-SubCell"/>
</dbReference>
<dbReference type="GO" id="GO:0016151">
    <property type="term" value="F:nickel cation binding"/>
    <property type="evidence" value="ECO:0007669"/>
    <property type="project" value="UniProtKB-UniRule"/>
</dbReference>
<dbReference type="HAMAP" id="MF_01384">
    <property type="entry name" value="UreD"/>
    <property type="match status" value="1"/>
</dbReference>
<dbReference type="InterPro" id="IPR002669">
    <property type="entry name" value="UreD"/>
</dbReference>
<dbReference type="PANTHER" id="PTHR33643">
    <property type="entry name" value="UREASE ACCESSORY PROTEIN D"/>
    <property type="match status" value="1"/>
</dbReference>
<dbReference type="PANTHER" id="PTHR33643:SF1">
    <property type="entry name" value="UREASE ACCESSORY PROTEIN D"/>
    <property type="match status" value="1"/>
</dbReference>
<dbReference type="Pfam" id="PF01774">
    <property type="entry name" value="UreD"/>
    <property type="match status" value="1"/>
</dbReference>
<feature type="chain" id="PRO_0000340414" description="Urease accessory protein UreD">
    <location>
        <begin position="1"/>
        <end position="276"/>
    </location>
</feature>